<feature type="chain" id="PRO_0000434860" description="Protein TIFY 11e">
    <location>
        <begin position="1"/>
        <end position="166"/>
    </location>
</feature>
<feature type="domain" description="Tify" evidence="3">
    <location>
        <begin position="65"/>
        <end position="100"/>
    </location>
</feature>
<feature type="short sequence motif" description="Jas" evidence="2">
    <location>
        <begin position="123"/>
        <end position="148"/>
    </location>
</feature>
<feature type="short sequence motif" description="Nuclear localization signal" evidence="4">
    <location>
        <begin position="125"/>
        <end position="132"/>
    </location>
</feature>
<protein>
    <recommendedName>
        <fullName evidence="7">Protein TIFY 11e</fullName>
        <shortName evidence="6">OsTIFY11e</shortName>
    </recommendedName>
    <alternativeName>
        <fullName evidence="7">Jasmonate ZIM domain-containing protein 13</fullName>
        <shortName evidence="6">OsJAZ13</shortName>
    </alternativeName>
</protein>
<accession>Q7XEZ6</accession>
<accession>A0A0P0XTU8</accession>
<evidence type="ECO:0000250" key="1">
    <source>
        <dbReference type="UniProtKB" id="Q7XPM8"/>
    </source>
</evidence>
<evidence type="ECO:0000255" key="2"/>
<evidence type="ECO:0000255" key="3">
    <source>
        <dbReference type="PROSITE-ProRule" id="PRU00650"/>
    </source>
</evidence>
<evidence type="ECO:0000255" key="4">
    <source>
        <dbReference type="PROSITE-ProRule" id="PRU00768"/>
    </source>
</evidence>
<evidence type="ECO:0000269" key="5">
    <source>
    </source>
</evidence>
<evidence type="ECO:0000303" key="6">
    <source>
    </source>
</evidence>
<evidence type="ECO:0000305" key="7"/>
<evidence type="ECO:0000312" key="8">
    <source>
        <dbReference type="EMBL" id="AAP53563.1"/>
    </source>
</evidence>
<evidence type="ECO:0000312" key="9">
    <source>
        <dbReference type="EMBL" id="BAF26425.1"/>
    </source>
</evidence>
<name>TI11E_ORYSJ</name>
<proteinExistence type="evidence at transcript level"/>
<comment type="function">
    <text evidence="1">Repressor of jasmonate responses.</text>
</comment>
<comment type="subcellular location">
    <subcellularLocation>
        <location evidence="4">Nucleus</location>
    </subcellularLocation>
</comment>
<comment type="induction">
    <text evidence="5">By jasmonate, wounding, and cold, drought and salt stresses. Down-regulated by abscisic acid (ABA).</text>
</comment>
<comment type="domain">
    <text evidence="1">The jas domain (123-148) is required for interaction with COI1.</text>
</comment>
<comment type="PTM">
    <text evidence="1">Ubiquitinated. Targeted for degradation by the SCF(COI1) E3 ubiquitin ligase-proteasome pathway during jasmonate signaling.</text>
</comment>
<comment type="similarity">
    <text evidence="7">Belongs to the TIFY/JAZ family.</text>
</comment>
<reference key="1">
    <citation type="journal article" date="2003" name="Science">
        <title>In-depth view of structure, activity, and evolution of rice chromosome 10.</title>
        <authorList>
            <person name="Yu Y."/>
            <person name="Rambo T."/>
            <person name="Currie J."/>
            <person name="Saski C."/>
            <person name="Kim H.-R."/>
            <person name="Collura K."/>
            <person name="Thompson S."/>
            <person name="Simmons J."/>
            <person name="Yang T.-J."/>
            <person name="Nah G."/>
            <person name="Patel A.J."/>
            <person name="Thurmond S."/>
            <person name="Henry D."/>
            <person name="Oates R."/>
            <person name="Palmer M."/>
            <person name="Pries G."/>
            <person name="Gibson J."/>
            <person name="Anderson H."/>
            <person name="Paradkar M."/>
            <person name="Crane L."/>
            <person name="Dale J."/>
            <person name="Carver M.B."/>
            <person name="Wood T."/>
            <person name="Frisch D."/>
            <person name="Engler F."/>
            <person name="Soderlund C."/>
            <person name="Palmer L.E."/>
            <person name="Teytelman L."/>
            <person name="Nascimento L."/>
            <person name="De la Bastide M."/>
            <person name="Spiegel L."/>
            <person name="Ware D."/>
            <person name="O'Shaughnessy A."/>
            <person name="Dike S."/>
            <person name="Dedhia N."/>
            <person name="Preston R."/>
            <person name="Huang E."/>
            <person name="Ferraro K."/>
            <person name="Kuit K."/>
            <person name="Miller B."/>
            <person name="Zutavern T."/>
            <person name="Katzenberger F."/>
            <person name="Muller S."/>
            <person name="Balija V."/>
            <person name="Martienssen R.A."/>
            <person name="Stein L."/>
            <person name="Minx P."/>
            <person name="Johnson D."/>
            <person name="Cordum H."/>
            <person name="Mardis E."/>
            <person name="Cheng Z."/>
            <person name="Jiang J."/>
            <person name="Wilson R."/>
            <person name="McCombie W.R."/>
            <person name="Wing R.A."/>
            <person name="Yuan Q."/>
            <person name="Ouyang S."/>
            <person name="Liu J."/>
            <person name="Jones K.M."/>
            <person name="Gansberger K."/>
            <person name="Moffat K."/>
            <person name="Hill J."/>
            <person name="Tsitrin T."/>
            <person name="Overton L."/>
            <person name="Bera J."/>
            <person name="Kim M."/>
            <person name="Jin S."/>
            <person name="Tallon L."/>
            <person name="Ciecko A."/>
            <person name="Pai G."/>
            <person name="Van Aken S."/>
            <person name="Utterback T."/>
            <person name="Reidmuller S."/>
            <person name="Bormann J."/>
            <person name="Feldblyum T."/>
            <person name="Hsiao J."/>
            <person name="Zismann V."/>
            <person name="Blunt S."/>
            <person name="de Vazeille A.R."/>
            <person name="Shaffer T."/>
            <person name="Koo H."/>
            <person name="Suh B."/>
            <person name="Yang Q."/>
            <person name="Haas B."/>
            <person name="Peterson J."/>
            <person name="Pertea M."/>
            <person name="Volfovsky N."/>
            <person name="Wortman J."/>
            <person name="White O."/>
            <person name="Salzberg S.L."/>
            <person name="Fraser C.M."/>
            <person name="Buell C.R."/>
            <person name="Messing J."/>
            <person name="Song R."/>
            <person name="Fuks G."/>
            <person name="Llaca V."/>
            <person name="Kovchak S."/>
            <person name="Young S."/>
            <person name="Bowers J.E."/>
            <person name="Paterson A.H."/>
            <person name="Johns M.A."/>
            <person name="Mao L."/>
            <person name="Pan H."/>
            <person name="Dean R.A."/>
        </authorList>
    </citation>
    <scope>NUCLEOTIDE SEQUENCE [LARGE SCALE GENOMIC DNA]</scope>
    <source>
        <strain>cv. Nipponbare</strain>
    </source>
</reference>
<reference key="2">
    <citation type="journal article" date="2005" name="Nature">
        <title>The map-based sequence of the rice genome.</title>
        <authorList>
            <consortium name="International rice genome sequencing project (IRGSP)"/>
        </authorList>
    </citation>
    <scope>NUCLEOTIDE SEQUENCE [LARGE SCALE GENOMIC DNA]</scope>
    <source>
        <strain>cv. Nipponbare</strain>
    </source>
</reference>
<reference key="3">
    <citation type="journal article" date="2008" name="Nucleic Acids Res.">
        <title>The rice annotation project database (RAP-DB): 2008 update.</title>
        <authorList>
            <consortium name="The rice annotation project (RAP)"/>
        </authorList>
    </citation>
    <scope>GENOME REANNOTATION</scope>
    <source>
        <strain>cv. Nipponbare</strain>
    </source>
</reference>
<reference key="4">
    <citation type="journal article" date="2013" name="Rice">
        <title>Improvement of the Oryza sativa Nipponbare reference genome using next generation sequence and optical map data.</title>
        <authorList>
            <person name="Kawahara Y."/>
            <person name="de la Bastide M."/>
            <person name="Hamilton J.P."/>
            <person name="Kanamori H."/>
            <person name="McCombie W.R."/>
            <person name="Ouyang S."/>
            <person name="Schwartz D.C."/>
            <person name="Tanaka T."/>
            <person name="Wu J."/>
            <person name="Zhou S."/>
            <person name="Childs K.L."/>
            <person name="Davidson R.M."/>
            <person name="Lin H."/>
            <person name="Quesada-Ocampo L."/>
            <person name="Vaillancourt B."/>
            <person name="Sakai H."/>
            <person name="Lee S.S."/>
            <person name="Kim J."/>
            <person name="Numa H."/>
            <person name="Itoh T."/>
            <person name="Buell C.R."/>
            <person name="Matsumoto T."/>
        </authorList>
    </citation>
    <scope>GENOME REANNOTATION</scope>
    <source>
        <strain>cv. Nipponbare</strain>
    </source>
</reference>
<reference key="5">
    <citation type="journal article" date="2003" name="Science">
        <title>Collection, mapping, and annotation of over 28,000 cDNA clones from japonica rice.</title>
        <authorList>
            <consortium name="The rice full-length cDNA consortium"/>
        </authorList>
    </citation>
    <scope>NUCLEOTIDE SEQUENCE [LARGE SCALE MRNA]</scope>
    <source>
        <strain>cv. Nipponbare</strain>
    </source>
</reference>
<reference key="6">
    <citation type="journal article" date="2009" name="Plant Mol. Biol.">
        <title>Identification and expression profiling analysis of TIFY family genes involved in stress and phytohormone responses in rice.</title>
        <authorList>
            <person name="Ye H."/>
            <person name="Du H."/>
            <person name="Tang N."/>
            <person name="Li X."/>
            <person name="Xiong L."/>
        </authorList>
    </citation>
    <scope>GENE FAMILY</scope>
    <scope>NOMENCLATURE</scope>
    <scope>INDUCTION</scope>
</reference>
<organism>
    <name type="scientific">Oryza sativa subsp. japonica</name>
    <name type="common">Rice</name>
    <dbReference type="NCBI Taxonomy" id="39947"/>
    <lineage>
        <taxon>Eukaryota</taxon>
        <taxon>Viridiplantae</taxon>
        <taxon>Streptophyta</taxon>
        <taxon>Embryophyta</taxon>
        <taxon>Tracheophyta</taxon>
        <taxon>Spermatophyta</taxon>
        <taxon>Magnoliopsida</taxon>
        <taxon>Liliopsida</taxon>
        <taxon>Poales</taxon>
        <taxon>Poaceae</taxon>
        <taxon>BOP clade</taxon>
        <taxon>Oryzoideae</taxon>
        <taxon>Oryzeae</taxon>
        <taxon>Oryzinae</taxon>
        <taxon>Oryza</taxon>
        <taxon>Oryza sativa</taxon>
    </lineage>
</organism>
<gene>
    <name evidence="6" type="primary">TIFY11E</name>
    <name evidence="6" type="synonym">JAZ13</name>
    <name evidence="9" type="ordered locus">Os10g0391400</name>
    <name evidence="8" type="ordered locus">LOC_Os10g25230</name>
</gene>
<sequence length="166" mass="16950">MAAEAAATSRFAAACGALSQYVRAADNVHRARTAAAAAAVRPLPLMPGADVAGDEREEEGGGAAASSAAAQMTIFYGGRVLVLDECPADRAAALLRLAASSRGVPRDDLASTAAAAGESADLPVARKASLQRFMEKRKGRLAARGQPYRRHDAAAAARGDHLALAL</sequence>
<dbReference type="EMBL" id="DP000086">
    <property type="protein sequence ID" value="AAP53563.1"/>
    <property type="molecule type" value="Genomic_DNA"/>
</dbReference>
<dbReference type="EMBL" id="AP008216">
    <property type="protein sequence ID" value="BAF26425.1"/>
    <property type="molecule type" value="Genomic_DNA"/>
</dbReference>
<dbReference type="EMBL" id="AP014966">
    <property type="protein sequence ID" value="BAT10672.1"/>
    <property type="molecule type" value="Genomic_DNA"/>
</dbReference>
<dbReference type="EMBL" id="AK107854">
    <property type="protein sequence ID" value="BAG98181.1"/>
    <property type="molecule type" value="mRNA"/>
</dbReference>
<dbReference type="RefSeq" id="XP_015613462.1">
    <property type="nucleotide sequence ID" value="XM_015757976.1"/>
</dbReference>
<dbReference type="SMR" id="Q7XEZ6"/>
<dbReference type="FunCoup" id="Q7XEZ6">
    <property type="interactions" value="4"/>
</dbReference>
<dbReference type="STRING" id="39947.Q7XEZ6"/>
<dbReference type="PaxDb" id="39947-Q7XEZ6"/>
<dbReference type="EnsemblPlants" id="Os10t0391400-01">
    <property type="protein sequence ID" value="Os10t0391400-01"/>
    <property type="gene ID" value="Os10g0391400"/>
</dbReference>
<dbReference type="Gramene" id="Os10t0391400-01">
    <property type="protein sequence ID" value="Os10t0391400-01"/>
    <property type="gene ID" value="Os10g0391400"/>
</dbReference>
<dbReference type="KEGG" id="dosa:Os10g0391400"/>
<dbReference type="eggNOG" id="ENOG502R3M9">
    <property type="taxonomic scope" value="Eukaryota"/>
</dbReference>
<dbReference type="HOGENOM" id="CLU_051749_3_1_1"/>
<dbReference type="InParanoid" id="Q7XEZ6"/>
<dbReference type="OMA" id="WGIEISD"/>
<dbReference type="PlantReactome" id="R-OSA-6787011">
    <property type="pathway name" value="Jasmonic acid signaling"/>
</dbReference>
<dbReference type="Proteomes" id="UP000000763">
    <property type="component" value="Chromosome 10"/>
</dbReference>
<dbReference type="Proteomes" id="UP000059680">
    <property type="component" value="Chromosome 10"/>
</dbReference>
<dbReference type="GO" id="GO:0005634">
    <property type="term" value="C:nucleus"/>
    <property type="evidence" value="ECO:0000318"/>
    <property type="project" value="GO_Central"/>
</dbReference>
<dbReference type="GO" id="GO:0031347">
    <property type="term" value="P:regulation of defense response"/>
    <property type="evidence" value="ECO:0000318"/>
    <property type="project" value="GO_Central"/>
</dbReference>
<dbReference type="GO" id="GO:2000022">
    <property type="term" value="P:regulation of jasmonic acid mediated signaling pathway"/>
    <property type="evidence" value="ECO:0000318"/>
    <property type="project" value="GO_Central"/>
</dbReference>
<dbReference type="GO" id="GO:0009611">
    <property type="term" value="P:response to wounding"/>
    <property type="evidence" value="ECO:0000318"/>
    <property type="project" value="GO_Central"/>
</dbReference>
<dbReference type="InterPro" id="IPR018467">
    <property type="entry name" value="CCT_CS"/>
</dbReference>
<dbReference type="InterPro" id="IPR040390">
    <property type="entry name" value="TIFY/JAZ"/>
</dbReference>
<dbReference type="InterPro" id="IPR010399">
    <property type="entry name" value="Tify_dom"/>
</dbReference>
<dbReference type="PANTHER" id="PTHR33077:SF97">
    <property type="entry name" value="PROTEIN TIFY 11E"/>
    <property type="match status" value="1"/>
</dbReference>
<dbReference type="PANTHER" id="PTHR33077">
    <property type="entry name" value="PROTEIN TIFY 4A-RELATED-RELATED"/>
    <property type="match status" value="1"/>
</dbReference>
<dbReference type="Pfam" id="PF09425">
    <property type="entry name" value="Jas_motif"/>
    <property type="match status" value="1"/>
</dbReference>
<dbReference type="Pfam" id="PF06200">
    <property type="entry name" value="tify"/>
    <property type="match status" value="1"/>
</dbReference>
<dbReference type="SMART" id="SM00979">
    <property type="entry name" value="TIFY"/>
    <property type="match status" value="1"/>
</dbReference>
<dbReference type="PROSITE" id="PS51320">
    <property type="entry name" value="TIFY"/>
    <property type="match status" value="1"/>
</dbReference>
<keyword id="KW-1184">Jasmonic acid signaling pathway</keyword>
<keyword id="KW-0539">Nucleus</keyword>
<keyword id="KW-1185">Reference proteome</keyword>
<keyword id="KW-0804">Transcription</keyword>
<keyword id="KW-0805">Transcription regulation</keyword>
<keyword id="KW-0832">Ubl conjugation</keyword>